<keyword id="KW-0028">Amino-acid biosynthesis</keyword>
<keyword id="KW-0963">Cytoplasm</keyword>
<keyword id="KW-0368">Histidine biosynthesis</keyword>
<keyword id="KW-0413">Isomerase</keyword>
<evidence type="ECO:0000255" key="1">
    <source>
        <dbReference type="HAMAP-Rule" id="MF_01014"/>
    </source>
</evidence>
<protein>
    <recommendedName>
        <fullName evidence="1">1-(5-phosphoribosyl)-5-[(5-phosphoribosylamino)methylideneamino] imidazole-4-carboxamide isomerase</fullName>
        <ecNumber evidence="1">5.3.1.16</ecNumber>
    </recommendedName>
    <alternativeName>
        <fullName evidence="1">Phosphoribosylformimino-5-aminoimidazole carboxamide ribotide isomerase</fullName>
    </alternativeName>
</protein>
<feature type="chain" id="PRO_0000142081" description="1-(5-phosphoribosyl)-5-[(5-phosphoribosylamino)methylideneamino] imidazole-4-carboxamide isomerase">
    <location>
        <begin position="1"/>
        <end position="245"/>
    </location>
</feature>
<feature type="active site" description="Proton acceptor" evidence="1">
    <location>
        <position position="7"/>
    </location>
</feature>
<feature type="active site" description="Proton donor" evidence="1">
    <location>
        <position position="129"/>
    </location>
</feature>
<name>HIS4_YERPS</name>
<comment type="catalytic activity">
    <reaction evidence="1">
        <text>1-(5-phospho-beta-D-ribosyl)-5-[(5-phospho-beta-D-ribosylamino)methylideneamino]imidazole-4-carboxamide = 5-[(5-phospho-1-deoxy-D-ribulos-1-ylimino)methylamino]-1-(5-phospho-beta-D-ribosyl)imidazole-4-carboxamide</text>
        <dbReference type="Rhea" id="RHEA:15469"/>
        <dbReference type="ChEBI" id="CHEBI:58435"/>
        <dbReference type="ChEBI" id="CHEBI:58525"/>
        <dbReference type="EC" id="5.3.1.16"/>
    </reaction>
</comment>
<comment type="pathway">
    <text evidence="1">Amino-acid biosynthesis; L-histidine biosynthesis; L-histidine from 5-phospho-alpha-D-ribose 1-diphosphate: step 4/9.</text>
</comment>
<comment type="subcellular location">
    <subcellularLocation>
        <location evidence="1">Cytoplasm</location>
    </subcellularLocation>
</comment>
<comment type="similarity">
    <text evidence="1">Belongs to the HisA/HisF family.</text>
</comment>
<accession>Q66C53</accession>
<proteinExistence type="inferred from homology"/>
<sequence length="245" mass="26647">MIIPALDLIEGKVVRLHQGDYGQQRDYGNHPLPRLQDYQQQGAQVLHLVDLTGAKDPAARQIPLLRELLAGVDVPVQVGGGIRNEQDVVALLEAGAARVVVGSTAVKQPEMVQQWFERYGAEAIVLALDVRINEAGCKHVAISGWQENSDATLEQIVEQYLPYGLKHVLCTDISRDGTLSGSNVELYQEVCQRYPQVAFQASGGIGCLDDIARLRGSGVQGVIVGRALLDGKFNVKEAIACWQNV</sequence>
<dbReference type="EC" id="5.3.1.16" evidence="1"/>
<dbReference type="EMBL" id="BX936398">
    <property type="protein sequence ID" value="CAH20796.1"/>
    <property type="molecule type" value="Genomic_DNA"/>
</dbReference>
<dbReference type="RefSeq" id="WP_002211891.1">
    <property type="nucleotide sequence ID" value="NZ_CP009712.1"/>
</dbReference>
<dbReference type="SMR" id="Q66C53"/>
<dbReference type="GeneID" id="96665163"/>
<dbReference type="KEGG" id="ypo:BZ17_958"/>
<dbReference type="KEGG" id="yps:YPTB1557"/>
<dbReference type="PATRIC" id="fig|273123.14.peg.1018"/>
<dbReference type="UniPathway" id="UPA00031">
    <property type="reaction ID" value="UER00009"/>
</dbReference>
<dbReference type="Proteomes" id="UP000001011">
    <property type="component" value="Chromosome"/>
</dbReference>
<dbReference type="GO" id="GO:0005737">
    <property type="term" value="C:cytoplasm"/>
    <property type="evidence" value="ECO:0007669"/>
    <property type="project" value="UniProtKB-SubCell"/>
</dbReference>
<dbReference type="GO" id="GO:0003949">
    <property type="term" value="F:1-(5-phosphoribosyl)-5-[(5-phosphoribosylamino)methylideneamino]imidazole-4-carboxamide isomerase activity"/>
    <property type="evidence" value="ECO:0007669"/>
    <property type="project" value="UniProtKB-UniRule"/>
</dbReference>
<dbReference type="GO" id="GO:0000105">
    <property type="term" value="P:L-histidine biosynthetic process"/>
    <property type="evidence" value="ECO:0007669"/>
    <property type="project" value="UniProtKB-UniRule"/>
</dbReference>
<dbReference type="GO" id="GO:0000162">
    <property type="term" value="P:L-tryptophan biosynthetic process"/>
    <property type="evidence" value="ECO:0007669"/>
    <property type="project" value="TreeGrafter"/>
</dbReference>
<dbReference type="CDD" id="cd04732">
    <property type="entry name" value="HisA"/>
    <property type="match status" value="1"/>
</dbReference>
<dbReference type="FunFam" id="3.20.20.70:FF:000009">
    <property type="entry name" value="1-(5-phosphoribosyl)-5-[(5-phosphoribosylamino)methylideneamino] imidazole-4-carboxamide isomerase"/>
    <property type="match status" value="1"/>
</dbReference>
<dbReference type="Gene3D" id="3.20.20.70">
    <property type="entry name" value="Aldolase class I"/>
    <property type="match status" value="1"/>
</dbReference>
<dbReference type="HAMAP" id="MF_01014">
    <property type="entry name" value="HisA"/>
    <property type="match status" value="1"/>
</dbReference>
<dbReference type="InterPro" id="IPR013785">
    <property type="entry name" value="Aldolase_TIM"/>
</dbReference>
<dbReference type="InterPro" id="IPR006062">
    <property type="entry name" value="His_biosynth"/>
</dbReference>
<dbReference type="InterPro" id="IPR006063">
    <property type="entry name" value="HisA_bact_arch"/>
</dbReference>
<dbReference type="InterPro" id="IPR044524">
    <property type="entry name" value="Isoase_HisA-like"/>
</dbReference>
<dbReference type="InterPro" id="IPR023016">
    <property type="entry name" value="Isoase_HisA-like_bact"/>
</dbReference>
<dbReference type="InterPro" id="IPR011060">
    <property type="entry name" value="RibuloseP-bd_barrel"/>
</dbReference>
<dbReference type="NCBIfam" id="TIGR00007">
    <property type="entry name" value="1-(5-phosphoribosyl)-5-[(5-phosphoribosylamino)methylideneamino]imidazole-4-carboxamide isomerase"/>
    <property type="match status" value="1"/>
</dbReference>
<dbReference type="PANTHER" id="PTHR43090">
    <property type="entry name" value="1-(5-PHOSPHORIBOSYL)-5-[(5-PHOSPHORIBOSYLAMINO)METHYLIDENEAMINO] IMIDAZOLE-4-CARBOXAMIDE ISOMERASE"/>
    <property type="match status" value="1"/>
</dbReference>
<dbReference type="PANTHER" id="PTHR43090:SF2">
    <property type="entry name" value="1-(5-PHOSPHORIBOSYL)-5-[(5-PHOSPHORIBOSYLAMINO)METHYLIDENEAMINO] IMIDAZOLE-4-CARBOXAMIDE ISOMERASE"/>
    <property type="match status" value="1"/>
</dbReference>
<dbReference type="Pfam" id="PF00977">
    <property type="entry name" value="His_biosynth"/>
    <property type="match status" value="1"/>
</dbReference>
<dbReference type="SUPFAM" id="SSF51366">
    <property type="entry name" value="Ribulose-phoshate binding barrel"/>
    <property type="match status" value="1"/>
</dbReference>
<organism>
    <name type="scientific">Yersinia pseudotuberculosis serotype I (strain IP32953)</name>
    <dbReference type="NCBI Taxonomy" id="273123"/>
    <lineage>
        <taxon>Bacteria</taxon>
        <taxon>Pseudomonadati</taxon>
        <taxon>Pseudomonadota</taxon>
        <taxon>Gammaproteobacteria</taxon>
        <taxon>Enterobacterales</taxon>
        <taxon>Yersiniaceae</taxon>
        <taxon>Yersinia</taxon>
    </lineage>
</organism>
<reference key="1">
    <citation type="journal article" date="2004" name="Proc. Natl. Acad. Sci. U.S.A.">
        <title>Insights into the evolution of Yersinia pestis through whole-genome comparison with Yersinia pseudotuberculosis.</title>
        <authorList>
            <person name="Chain P.S.G."/>
            <person name="Carniel E."/>
            <person name="Larimer F.W."/>
            <person name="Lamerdin J."/>
            <person name="Stoutland P.O."/>
            <person name="Regala W.M."/>
            <person name="Georgescu A.M."/>
            <person name="Vergez L.M."/>
            <person name="Land M.L."/>
            <person name="Motin V.L."/>
            <person name="Brubaker R.R."/>
            <person name="Fowler J."/>
            <person name="Hinnebusch J."/>
            <person name="Marceau M."/>
            <person name="Medigue C."/>
            <person name="Simonet M."/>
            <person name="Chenal-Francisque V."/>
            <person name="Souza B."/>
            <person name="Dacheux D."/>
            <person name="Elliott J.M."/>
            <person name="Derbise A."/>
            <person name="Hauser L.J."/>
            <person name="Garcia E."/>
        </authorList>
    </citation>
    <scope>NUCLEOTIDE SEQUENCE [LARGE SCALE GENOMIC DNA]</scope>
    <source>
        <strain>IP32953</strain>
    </source>
</reference>
<gene>
    <name evidence="1" type="primary">hisA</name>
    <name type="ordered locus">YPTB1557</name>
</gene>